<name>SSRP_COLP3</name>
<reference key="1">
    <citation type="journal article" date="2005" name="Proc. Natl. Acad. Sci. U.S.A.">
        <title>The psychrophilic lifestyle as revealed by the genome sequence of Colwellia psychrerythraea 34H through genomic and proteomic analyses.</title>
        <authorList>
            <person name="Methe B.A."/>
            <person name="Nelson K.E."/>
            <person name="Deming J.W."/>
            <person name="Momen B."/>
            <person name="Melamud E."/>
            <person name="Zhang X."/>
            <person name="Moult J."/>
            <person name="Madupu R."/>
            <person name="Nelson W.C."/>
            <person name="Dodson R.J."/>
            <person name="Brinkac L.M."/>
            <person name="Daugherty S.C."/>
            <person name="Durkin A.S."/>
            <person name="DeBoy R.T."/>
            <person name="Kolonay J.F."/>
            <person name="Sullivan S.A."/>
            <person name="Zhou L."/>
            <person name="Davidsen T.M."/>
            <person name="Wu M."/>
            <person name="Huston A.L."/>
            <person name="Lewis M."/>
            <person name="Weaver B."/>
            <person name="Weidman J.F."/>
            <person name="Khouri H."/>
            <person name="Utterback T.R."/>
            <person name="Feldblyum T.V."/>
            <person name="Fraser C.M."/>
        </authorList>
    </citation>
    <scope>NUCLEOTIDE SEQUENCE [LARGE SCALE GENOMIC DNA]</scope>
    <source>
        <strain>34H / ATCC BAA-681</strain>
    </source>
</reference>
<proteinExistence type="inferred from homology"/>
<comment type="function">
    <text evidence="1">Required for rescue of stalled ribosomes mediated by trans-translation. Binds to transfer-messenger RNA (tmRNA), required for stable association of tmRNA with ribosomes. tmRNA and SmpB together mimic tRNA shape, replacing the anticodon stem-loop with SmpB. tmRNA is encoded by the ssrA gene; the 2 termini fold to resemble tRNA(Ala) and it encodes a 'tag peptide', a short internal open reading frame. During trans-translation Ala-aminoacylated tmRNA acts like a tRNA, entering the A-site of stalled ribosomes, displacing the stalled mRNA. The ribosome then switches to translate the ORF on the tmRNA; the nascent peptide is terminated with the 'tag peptide' encoded by the tmRNA and targeted for degradation. The ribosome is freed to recommence translation, which seems to be the essential function of trans-translation.</text>
</comment>
<comment type="subcellular location">
    <subcellularLocation>
        <location evidence="1">Cytoplasm</location>
    </subcellularLocation>
    <text evidence="1">The tmRNA-SmpB complex associates with stalled 70S ribosomes.</text>
</comment>
<comment type="similarity">
    <text evidence="1">Belongs to the SmpB family.</text>
</comment>
<feature type="chain" id="PRO_1000002040" description="SsrA-binding protein">
    <location>
        <begin position="1"/>
        <end position="162"/>
    </location>
</feature>
<gene>
    <name evidence="1" type="primary">smpB</name>
    <name type="ordered locus">CPS_3829</name>
</gene>
<evidence type="ECO:0000255" key="1">
    <source>
        <dbReference type="HAMAP-Rule" id="MF_00023"/>
    </source>
</evidence>
<dbReference type="EMBL" id="CP000083">
    <property type="protein sequence ID" value="AAZ27238.1"/>
    <property type="molecule type" value="Genomic_DNA"/>
</dbReference>
<dbReference type="RefSeq" id="WP_011044578.1">
    <property type="nucleotide sequence ID" value="NC_003910.7"/>
</dbReference>
<dbReference type="SMR" id="Q47XH8"/>
<dbReference type="STRING" id="167879.CPS_3829"/>
<dbReference type="KEGG" id="cps:CPS_3829"/>
<dbReference type="eggNOG" id="COG0691">
    <property type="taxonomic scope" value="Bacteria"/>
</dbReference>
<dbReference type="HOGENOM" id="CLU_108953_3_0_6"/>
<dbReference type="Proteomes" id="UP000000547">
    <property type="component" value="Chromosome"/>
</dbReference>
<dbReference type="GO" id="GO:0005829">
    <property type="term" value="C:cytosol"/>
    <property type="evidence" value="ECO:0007669"/>
    <property type="project" value="TreeGrafter"/>
</dbReference>
<dbReference type="GO" id="GO:0003723">
    <property type="term" value="F:RNA binding"/>
    <property type="evidence" value="ECO:0007669"/>
    <property type="project" value="UniProtKB-UniRule"/>
</dbReference>
<dbReference type="GO" id="GO:0070929">
    <property type="term" value="P:trans-translation"/>
    <property type="evidence" value="ECO:0007669"/>
    <property type="project" value="UniProtKB-UniRule"/>
</dbReference>
<dbReference type="CDD" id="cd09294">
    <property type="entry name" value="SmpB"/>
    <property type="match status" value="1"/>
</dbReference>
<dbReference type="Gene3D" id="2.40.280.10">
    <property type="match status" value="1"/>
</dbReference>
<dbReference type="HAMAP" id="MF_00023">
    <property type="entry name" value="SmpB"/>
    <property type="match status" value="1"/>
</dbReference>
<dbReference type="InterPro" id="IPR023620">
    <property type="entry name" value="SmpB"/>
</dbReference>
<dbReference type="InterPro" id="IPR000037">
    <property type="entry name" value="SsrA-bd_prot"/>
</dbReference>
<dbReference type="NCBIfam" id="NF003843">
    <property type="entry name" value="PRK05422.1"/>
    <property type="match status" value="1"/>
</dbReference>
<dbReference type="NCBIfam" id="TIGR00086">
    <property type="entry name" value="smpB"/>
    <property type="match status" value="1"/>
</dbReference>
<dbReference type="PANTHER" id="PTHR30308:SF2">
    <property type="entry name" value="SSRA-BINDING PROTEIN"/>
    <property type="match status" value="1"/>
</dbReference>
<dbReference type="PANTHER" id="PTHR30308">
    <property type="entry name" value="TMRNA-BINDING COMPONENT OF TRANS-TRANSLATION TAGGING COMPLEX"/>
    <property type="match status" value="1"/>
</dbReference>
<dbReference type="Pfam" id="PF01668">
    <property type="entry name" value="SmpB"/>
    <property type="match status" value="1"/>
</dbReference>
<dbReference type="SUPFAM" id="SSF74982">
    <property type="entry name" value="Small protein B (SmpB)"/>
    <property type="match status" value="1"/>
</dbReference>
<accession>Q47XH8</accession>
<sequence>MAKKKSKSSNSNTIALNKKARHNYSLTDKFEGGMSLQGWEIKSIRSGKVNISDCYVHIKDREAYLLGAEISPLNAASSHVVCDPNRDRKLLLNRRELDKIIAAVERDGYSLIATAMYWKACWVKLEFYLGKGKKDHDKRSDIKDREWAVDKGRLMKNKNLDR</sequence>
<keyword id="KW-0963">Cytoplasm</keyword>
<keyword id="KW-0694">RNA-binding</keyword>
<protein>
    <recommendedName>
        <fullName evidence="1">SsrA-binding protein</fullName>
    </recommendedName>
    <alternativeName>
        <fullName evidence="1">Small protein B</fullName>
    </alternativeName>
</protein>
<organism>
    <name type="scientific">Colwellia psychrerythraea (strain 34H / ATCC BAA-681)</name>
    <name type="common">Vibrio psychroerythus</name>
    <dbReference type="NCBI Taxonomy" id="167879"/>
    <lineage>
        <taxon>Bacteria</taxon>
        <taxon>Pseudomonadati</taxon>
        <taxon>Pseudomonadota</taxon>
        <taxon>Gammaproteobacteria</taxon>
        <taxon>Alteromonadales</taxon>
        <taxon>Colwelliaceae</taxon>
        <taxon>Colwellia</taxon>
    </lineage>
</organism>